<dbReference type="EMBL" id="AC132486">
    <property type="protein sequence ID" value="AAT38071.1"/>
    <property type="molecule type" value="Genomic_DNA"/>
</dbReference>
<dbReference type="EMBL" id="AP008211">
    <property type="protein sequence ID" value="BAF16775.1"/>
    <property type="molecule type" value="Genomic_DNA"/>
</dbReference>
<dbReference type="EMBL" id="AP014961">
    <property type="protein sequence ID" value="BAS92668.1"/>
    <property type="molecule type" value="Genomic_DNA"/>
</dbReference>
<dbReference type="EMBL" id="AK106392">
    <property type="status" value="NOT_ANNOTATED_CDS"/>
    <property type="molecule type" value="mRNA"/>
</dbReference>
<dbReference type="RefSeq" id="XP_015640763.1">
    <property type="nucleotide sequence ID" value="XM_015785277.1"/>
</dbReference>
<dbReference type="FunCoup" id="Q6L4N4">
    <property type="interactions" value="1249"/>
</dbReference>
<dbReference type="STRING" id="39947.Q6L4N4"/>
<dbReference type="PaxDb" id="39947-Q6L4N4"/>
<dbReference type="EnsemblPlants" id="Os05t0195200-01">
    <property type="protein sequence ID" value="Os05t0195200-01"/>
    <property type="gene ID" value="Os05g0195200"/>
</dbReference>
<dbReference type="Gramene" id="Os05t0195200-01">
    <property type="protein sequence ID" value="Os05t0195200-01"/>
    <property type="gene ID" value="Os05g0195200"/>
</dbReference>
<dbReference type="KEGG" id="dosa:Os05g0195200"/>
<dbReference type="eggNOG" id="KOG1595">
    <property type="taxonomic scope" value="Eukaryota"/>
</dbReference>
<dbReference type="HOGENOM" id="CLU_044407_0_0_1"/>
<dbReference type="InParanoid" id="Q6L4N4"/>
<dbReference type="OMA" id="HYSGMAC"/>
<dbReference type="OrthoDB" id="410307at2759"/>
<dbReference type="Proteomes" id="UP000000763">
    <property type="component" value="Chromosome 5"/>
</dbReference>
<dbReference type="Proteomes" id="UP000059680">
    <property type="component" value="Chromosome 5"/>
</dbReference>
<dbReference type="GO" id="GO:0003677">
    <property type="term" value="F:DNA binding"/>
    <property type="evidence" value="ECO:0007669"/>
    <property type="project" value="UniProtKB-KW"/>
</dbReference>
<dbReference type="GO" id="GO:0008270">
    <property type="term" value="F:zinc ion binding"/>
    <property type="evidence" value="ECO:0007669"/>
    <property type="project" value="UniProtKB-KW"/>
</dbReference>
<dbReference type="FunFam" id="3.30.1370.210:FF:000009">
    <property type="entry name" value="Zinc finger CCCH domain-containing protein 66"/>
    <property type="match status" value="1"/>
</dbReference>
<dbReference type="Gene3D" id="3.30.1370.210">
    <property type="match status" value="1"/>
</dbReference>
<dbReference type="InterPro" id="IPR045234">
    <property type="entry name" value="Unkempt-like"/>
</dbReference>
<dbReference type="InterPro" id="IPR000571">
    <property type="entry name" value="Znf_CCCH"/>
</dbReference>
<dbReference type="PANTHER" id="PTHR14493">
    <property type="entry name" value="UNKEMPT FAMILY MEMBER"/>
    <property type="match status" value="1"/>
</dbReference>
<dbReference type="PANTHER" id="PTHR14493:SF108">
    <property type="entry name" value="ZINC FINGER CCCH DOMAIN-CONTAINING PROTEIN 35"/>
    <property type="match status" value="1"/>
</dbReference>
<dbReference type="Pfam" id="PF00642">
    <property type="entry name" value="zf-CCCH"/>
    <property type="match status" value="1"/>
</dbReference>
<dbReference type="Pfam" id="PF25512">
    <property type="entry name" value="zf-CCCH_AtC3H23"/>
    <property type="match status" value="1"/>
</dbReference>
<dbReference type="SMART" id="SM00356">
    <property type="entry name" value="ZnF_C3H1"/>
    <property type="match status" value="2"/>
</dbReference>
<dbReference type="PROSITE" id="PS50103">
    <property type="entry name" value="ZF_C3H1"/>
    <property type="match status" value="2"/>
</dbReference>
<reference key="1">
    <citation type="journal article" date="2005" name="Mol. Genet. Genomics">
        <title>A fine physical map of the rice chromosome 5.</title>
        <authorList>
            <person name="Cheng C.-H."/>
            <person name="Chung M.C."/>
            <person name="Liu S.-M."/>
            <person name="Chen S.-K."/>
            <person name="Kao F.Y."/>
            <person name="Lin S.-J."/>
            <person name="Hsiao S.-H."/>
            <person name="Tseng I.C."/>
            <person name="Hsing Y.-I.C."/>
            <person name="Wu H.-P."/>
            <person name="Chen C.-S."/>
            <person name="Shaw J.-F."/>
            <person name="Wu J."/>
            <person name="Matsumoto T."/>
            <person name="Sasaki T."/>
            <person name="Chen H.-C."/>
            <person name="Chow T.-Y."/>
        </authorList>
    </citation>
    <scope>NUCLEOTIDE SEQUENCE [LARGE SCALE GENOMIC DNA]</scope>
    <source>
        <strain>cv. Nipponbare</strain>
    </source>
</reference>
<reference key="2">
    <citation type="journal article" date="2005" name="Nature">
        <title>The map-based sequence of the rice genome.</title>
        <authorList>
            <consortium name="International rice genome sequencing project (IRGSP)"/>
        </authorList>
    </citation>
    <scope>NUCLEOTIDE SEQUENCE [LARGE SCALE GENOMIC DNA]</scope>
    <source>
        <strain>cv. Nipponbare</strain>
    </source>
</reference>
<reference key="3">
    <citation type="journal article" date="2008" name="Nucleic Acids Res.">
        <title>The rice annotation project database (RAP-DB): 2008 update.</title>
        <authorList>
            <consortium name="The rice annotation project (RAP)"/>
        </authorList>
    </citation>
    <scope>GENOME REANNOTATION</scope>
    <source>
        <strain>cv. Nipponbare</strain>
    </source>
</reference>
<reference key="4">
    <citation type="journal article" date="2013" name="Rice">
        <title>Improvement of the Oryza sativa Nipponbare reference genome using next generation sequence and optical map data.</title>
        <authorList>
            <person name="Kawahara Y."/>
            <person name="de la Bastide M."/>
            <person name="Hamilton J.P."/>
            <person name="Kanamori H."/>
            <person name="McCombie W.R."/>
            <person name="Ouyang S."/>
            <person name="Schwartz D.C."/>
            <person name="Tanaka T."/>
            <person name="Wu J."/>
            <person name="Zhou S."/>
            <person name="Childs K.L."/>
            <person name="Davidson R.M."/>
            <person name="Lin H."/>
            <person name="Quesada-Ocampo L."/>
            <person name="Vaillancourt B."/>
            <person name="Sakai H."/>
            <person name="Lee S.S."/>
            <person name="Kim J."/>
            <person name="Numa H."/>
            <person name="Itoh T."/>
            <person name="Buell C.R."/>
            <person name="Matsumoto T."/>
        </authorList>
    </citation>
    <scope>GENOME REANNOTATION</scope>
    <source>
        <strain>cv. Nipponbare</strain>
    </source>
</reference>
<reference key="5">
    <citation type="journal article" date="2003" name="Science">
        <title>Collection, mapping, and annotation of over 28,000 cDNA clones from japonica rice.</title>
        <authorList>
            <consortium name="The rice full-length cDNA consortium"/>
        </authorList>
    </citation>
    <scope>NUCLEOTIDE SEQUENCE [LARGE SCALE MRNA]</scope>
    <source>
        <strain>cv. Nipponbare</strain>
    </source>
</reference>
<reference key="6">
    <citation type="journal article" date="2008" name="BMC Genomics">
        <title>Genome-wide analysis of CCCH zinc finger family in Arabidopsis and rice.</title>
        <authorList>
            <person name="Wang D."/>
            <person name="Guo Y."/>
            <person name="Wu C."/>
            <person name="Yang G."/>
            <person name="Li Y."/>
            <person name="Zheng C."/>
        </authorList>
    </citation>
    <scope>NOMENCLATURE</scope>
</reference>
<feature type="chain" id="PRO_0000346830" description="Zinc finger CCCH domain-containing protein 35">
    <location>
        <begin position="1"/>
        <end position="402"/>
    </location>
</feature>
<feature type="zinc finger region" description="C3H1-type 1" evidence="1">
    <location>
        <begin position="117"/>
        <end position="144"/>
    </location>
</feature>
<feature type="zinc finger region" description="C3H1-type 2" evidence="1">
    <location>
        <begin position="152"/>
        <end position="176"/>
    </location>
</feature>
<feature type="region of interest" description="Disordered" evidence="2">
    <location>
        <begin position="180"/>
        <end position="211"/>
    </location>
</feature>
<feature type="region of interest" description="Disordered" evidence="2">
    <location>
        <begin position="232"/>
        <end position="258"/>
    </location>
</feature>
<feature type="compositionally biased region" description="Polar residues" evidence="2">
    <location>
        <begin position="183"/>
        <end position="192"/>
    </location>
</feature>
<feature type="compositionally biased region" description="Low complexity" evidence="2">
    <location>
        <begin position="232"/>
        <end position="241"/>
    </location>
</feature>
<feature type="compositionally biased region" description="Pro residues" evidence="2">
    <location>
        <begin position="242"/>
        <end position="253"/>
    </location>
</feature>
<protein>
    <recommendedName>
        <fullName>Zinc finger CCCH domain-containing protein 35</fullName>
        <shortName>OsC3H35</shortName>
    </recommendedName>
    <alternativeName>
        <fullName>Protein DELAY OF THE ONSET OF SENESCENCE-like</fullName>
    </alternativeName>
</protein>
<proteinExistence type="evidence at transcript level"/>
<keyword id="KW-0238">DNA-binding</keyword>
<keyword id="KW-0479">Metal-binding</keyword>
<keyword id="KW-1185">Reference proteome</keyword>
<keyword id="KW-0677">Repeat</keyword>
<keyword id="KW-0862">Zinc</keyword>
<keyword id="KW-0863">Zinc-finger</keyword>
<sequence>MMMMGEGAHAPPWQQHVASPVSGVEGGGGRESEVVAAPYHLLDTLRHYLPSNEAAAAEDEEEAAAVAAAVDAYACDEFRMYEFKVRRCARGRSHDWTECPFAHPGEKARRRDPRRYCYSGTACPDFRKGGCKRGDACEFAHGVFECWLHPARYRTQPCKDGTACRRRVCFFAHTPDQLRVLPPSQQQGSNSPRGCGGGGAGAAASPLAESYDGSPLRRQAFESYLTKSIMSSSPTSTLVSPPRSPPSESPPLSPDAAGALRRGAWAGVGSPVNDVHVSLRQLRLGSPRSAPSCASFLPAGYQYGSPKSPAAAAAAALYSLPSTPTRLSPVTVTTASGATVTVEPLDLGLIEEEQPMERVESGRALREKVFERLSKEATVSTDAAAAAAGVAPDVGWVSDLIN</sequence>
<accession>Q6L4N4</accession>
<accession>A0A0P0WJ25</accession>
<organism>
    <name type="scientific">Oryza sativa subsp. japonica</name>
    <name type="common">Rice</name>
    <dbReference type="NCBI Taxonomy" id="39947"/>
    <lineage>
        <taxon>Eukaryota</taxon>
        <taxon>Viridiplantae</taxon>
        <taxon>Streptophyta</taxon>
        <taxon>Embryophyta</taxon>
        <taxon>Tracheophyta</taxon>
        <taxon>Spermatophyta</taxon>
        <taxon>Magnoliopsida</taxon>
        <taxon>Liliopsida</taxon>
        <taxon>Poales</taxon>
        <taxon>Poaceae</taxon>
        <taxon>BOP clade</taxon>
        <taxon>Oryzoideae</taxon>
        <taxon>Oryzeae</taxon>
        <taxon>Oryzinae</taxon>
        <taxon>Oryza</taxon>
        <taxon>Oryza sativa</taxon>
    </lineage>
</organism>
<gene>
    <name type="ordered locus">Os05g0195200</name>
    <name type="ordered locus">LOC_Os05g10670</name>
    <name type="ORF">P0473H02.8</name>
</gene>
<name>C3H35_ORYSJ</name>
<evidence type="ECO:0000255" key="1">
    <source>
        <dbReference type="PROSITE-ProRule" id="PRU00723"/>
    </source>
</evidence>
<evidence type="ECO:0000256" key="2">
    <source>
        <dbReference type="SAM" id="MobiDB-lite"/>
    </source>
</evidence>